<evidence type="ECO:0000250" key="1">
    <source>
        <dbReference type="UniProtKB" id="G5EEV2"/>
    </source>
</evidence>
<evidence type="ECO:0000255" key="2"/>
<evidence type="ECO:0000255" key="3">
    <source>
        <dbReference type="PROSITE-ProRule" id="PRU00269"/>
    </source>
</evidence>
<evidence type="ECO:0000255" key="4">
    <source>
        <dbReference type="PROSITE-ProRule" id="PRU00534"/>
    </source>
</evidence>
<evidence type="ECO:0000255" key="5">
    <source>
        <dbReference type="PROSITE-ProRule" id="PRU00535"/>
    </source>
</evidence>
<evidence type="ECO:0000256" key="6">
    <source>
        <dbReference type="SAM" id="MobiDB-lite"/>
    </source>
</evidence>
<evidence type="ECO:0000269" key="7">
    <source>
    </source>
</evidence>
<evidence type="ECO:0000303" key="8">
    <source>
    </source>
</evidence>
<evidence type="ECO:0000305" key="9"/>
<evidence type="ECO:0000312" key="10">
    <source>
        <dbReference type="EMBL" id="CAP23759.2"/>
    </source>
</evidence>
<evidence type="ECO:0000312" key="11">
    <source>
        <dbReference type="Proteomes" id="UP000008549"/>
    </source>
</evidence>
<evidence type="ECO:0000312" key="12">
    <source>
        <dbReference type="WormBase" id="CBG02835"/>
    </source>
</evidence>
<reference evidence="10 11" key="1">
    <citation type="journal article" date="2003" name="PLoS Biol.">
        <title>The genome sequence of Caenorhabditis briggsae: a platform for comparative genomics.</title>
        <authorList>
            <person name="Stein L.D."/>
            <person name="Bao Z."/>
            <person name="Blasiar D."/>
            <person name="Blumenthal T."/>
            <person name="Brent M.R."/>
            <person name="Chen N."/>
            <person name="Chinwalla A."/>
            <person name="Clarke L."/>
            <person name="Clee C."/>
            <person name="Coghlan A."/>
            <person name="Coulson A."/>
            <person name="D'Eustachio P."/>
            <person name="Fitch D.H.A."/>
            <person name="Fulton L.A."/>
            <person name="Fulton R.E."/>
            <person name="Griffiths-Jones S."/>
            <person name="Harris T.W."/>
            <person name="Hillier L.W."/>
            <person name="Kamath R."/>
            <person name="Kuwabara P.E."/>
            <person name="Mardis E.R."/>
            <person name="Marra M.A."/>
            <person name="Miner T.L."/>
            <person name="Minx P."/>
            <person name="Mullikin J.C."/>
            <person name="Plumb R.W."/>
            <person name="Rogers J."/>
            <person name="Schein J.E."/>
            <person name="Sohrmann M."/>
            <person name="Spieth J."/>
            <person name="Stajich J.E."/>
            <person name="Wei C."/>
            <person name="Willey D."/>
            <person name="Wilson R.K."/>
            <person name="Durbin R.M."/>
            <person name="Waterston R.H."/>
        </authorList>
    </citation>
    <scope>NUCLEOTIDE SEQUENCE [LARGE SCALE GENOMIC DNA]</scope>
    <source>
        <strain evidence="10 11">AF16</strain>
    </source>
</reference>
<reference evidence="9" key="2">
    <citation type="journal article" date="2013" name="PLoS Genet.">
        <title>Evolutionary change within a bipotential switch shaped the sperm/oocyte decision in hermaphroditic nematodes.</title>
        <authorList>
            <person name="Guo Y."/>
            <person name="Chen X."/>
            <person name="Ellis R.E."/>
        </authorList>
    </citation>
    <scope>FUNCTION</scope>
    <scope>DISRUPTION PHENOTYPE</scope>
    <scope>MUTAGENESIS OF LEU-1123 AND GLY-1196</scope>
</reference>
<proteinExistence type="evidence at protein level"/>
<dbReference type="EMBL" id="HE601438">
    <property type="protein sequence ID" value="CAP23759.2"/>
    <property type="molecule type" value="Genomic_DNA"/>
</dbReference>
<dbReference type="SMR" id="A8WTE8"/>
<dbReference type="FunCoup" id="A8WTE8">
    <property type="interactions" value="2391"/>
</dbReference>
<dbReference type="STRING" id="6238.A8WTE8"/>
<dbReference type="WormBase" id="CBG02835">
    <property type="protein sequence ID" value="CBP42819"/>
    <property type="gene ID" value="WBGene00025810"/>
    <property type="gene designation" value="Cbr-trr-1"/>
</dbReference>
<dbReference type="eggNOG" id="KOG0889">
    <property type="taxonomic scope" value="Eukaryota"/>
</dbReference>
<dbReference type="HOGENOM" id="CLU_000129_1_0_1"/>
<dbReference type="InParanoid" id="A8WTE8"/>
<dbReference type="OMA" id="CETCPSH"/>
<dbReference type="Proteomes" id="UP000008549">
    <property type="component" value="Unassembled WGS sequence"/>
</dbReference>
<dbReference type="GO" id="GO:0035267">
    <property type="term" value="C:NuA4 histone acetyltransferase complex"/>
    <property type="evidence" value="ECO:0000318"/>
    <property type="project" value="GO_Central"/>
</dbReference>
<dbReference type="GO" id="GO:0005634">
    <property type="term" value="C:nucleus"/>
    <property type="evidence" value="ECO:0000318"/>
    <property type="project" value="GO_Central"/>
</dbReference>
<dbReference type="GO" id="GO:0000124">
    <property type="term" value="C:SAGA complex"/>
    <property type="evidence" value="ECO:0000318"/>
    <property type="project" value="GO_Central"/>
</dbReference>
<dbReference type="GO" id="GO:0030154">
    <property type="term" value="P:cell differentiation"/>
    <property type="evidence" value="ECO:0007669"/>
    <property type="project" value="UniProtKB-KW"/>
</dbReference>
<dbReference type="GO" id="GO:0140861">
    <property type="term" value="P:DNA repair-dependent chromatin remodeling"/>
    <property type="evidence" value="ECO:0000318"/>
    <property type="project" value="GO_Central"/>
</dbReference>
<dbReference type="GO" id="GO:0006355">
    <property type="term" value="P:regulation of DNA-templated transcription"/>
    <property type="evidence" value="ECO:0000318"/>
    <property type="project" value="GO_Central"/>
</dbReference>
<dbReference type="GO" id="GO:0007283">
    <property type="term" value="P:spermatogenesis"/>
    <property type="evidence" value="ECO:0007669"/>
    <property type="project" value="UniProtKB-KW"/>
</dbReference>
<dbReference type="InterPro" id="IPR016024">
    <property type="entry name" value="ARM-type_fold"/>
</dbReference>
<dbReference type="InterPro" id="IPR050517">
    <property type="entry name" value="DDR_Repair_Kinase"/>
</dbReference>
<dbReference type="InterPro" id="IPR003152">
    <property type="entry name" value="FATC_dom"/>
</dbReference>
<dbReference type="InterPro" id="IPR011009">
    <property type="entry name" value="Kinase-like_dom_sf"/>
</dbReference>
<dbReference type="InterPro" id="IPR000403">
    <property type="entry name" value="PI3/4_kinase_cat_dom"/>
</dbReference>
<dbReference type="InterPro" id="IPR003151">
    <property type="entry name" value="PIK-rel_kinase_FAT"/>
</dbReference>
<dbReference type="InterPro" id="IPR014009">
    <property type="entry name" value="PIK_FAT"/>
</dbReference>
<dbReference type="InterPro" id="IPR046807">
    <property type="entry name" value="Tra1_central"/>
</dbReference>
<dbReference type="InterPro" id="IPR046805">
    <property type="entry name" value="Tra1_ring"/>
</dbReference>
<dbReference type="PANTHER" id="PTHR11139">
    <property type="entry name" value="ATAXIA TELANGIECTASIA MUTATED ATM -RELATED"/>
    <property type="match status" value="1"/>
</dbReference>
<dbReference type="PANTHER" id="PTHR11139:SF1">
    <property type="entry name" value="TRANSFORMATION_TRANSCRIPTION DOMAIN-ASSOCIATED PROTEIN"/>
    <property type="match status" value="1"/>
</dbReference>
<dbReference type="Pfam" id="PF02259">
    <property type="entry name" value="FAT"/>
    <property type="match status" value="1"/>
</dbReference>
<dbReference type="Pfam" id="PF20175">
    <property type="entry name" value="Tra1_central"/>
    <property type="match status" value="1"/>
</dbReference>
<dbReference type="Pfam" id="PF20206">
    <property type="entry name" value="Tra1_ring"/>
    <property type="match status" value="1"/>
</dbReference>
<dbReference type="SMART" id="SM00146">
    <property type="entry name" value="PI3Kc"/>
    <property type="match status" value="1"/>
</dbReference>
<dbReference type="SUPFAM" id="SSF48371">
    <property type="entry name" value="ARM repeat"/>
    <property type="match status" value="3"/>
</dbReference>
<dbReference type="SUPFAM" id="SSF56112">
    <property type="entry name" value="Protein kinase-like (PK-like)"/>
    <property type="match status" value="1"/>
</dbReference>
<dbReference type="PROSITE" id="PS51189">
    <property type="entry name" value="FAT"/>
    <property type="match status" value="1"/>
</dbReference>
<dbReference type="PROSITE" id="PS51190">
    <property type="entry name" value="FATC"/>
    <property type="match status" value="1"/>
</dbReference>
<dbReference type="PROSITE" id="PS50290">
    <property type="entry name" value="PI3_4_KINASE_3"/>
    <property type="match status" value="1"/>
</dbReference>
<organism>
    <name type="scientific">Caenorhabditis briggsae</name>
    <dbReference type="NCBI Taxonomy" id="6238"/>
    <lineage>
        <taxon>Eukaryota</taxon>
        <taxon>Metazoa</taxon>
        <taxon>Ecdysozoa</taxon>
        <taxon>Nematoda</taxon>
        <taxon>Chromadorea</taxon>
        <taxon>Rhabditida</taxon>
        <taxon>Rhabditina</taxon>
        <taxon>Rhabditomorpha</taxon>
        <taxon>Rhabditoidea</taxon>
        <taxon>Rhabditidae</taxon>
        <taxon>Peloderinae</taxon>
        <taxon>Caenorhabditis</taxon>
    </lineage>
</organism>
<comment type="function">
    <text evidence="1 7">Influences germ cell fate in hermaphrodites (PubMed:24098152). Acts downstream of tra-2 and tra-3 and through the Tip60 histone acetyltransferase complex to regulate germ cell fate decisions (PubMed:24098152). Required for spermatogenesis and embryonic development (PubMed:24098152). Acts with tra-2 to promote expression of fog-3 and control male tail development (PubMed:24098152). Involved in the negative regulation of vulval development (By similarity).</text>
</comment>
<comment type="subcellular location">
    <subcellularLocation>
        <location evidence="1">Nucleus</location>
    </subcellularLocation>
    <text evidence="1">Localized to condensed chromosomes during pachytene and diakinesis stages of meiosis I in germ cells.</text>
</comment>
<comment type="disruption phenotype">
    <text evidence="7">Null mutants display a feminization of the germ line (Fog) phenotype producing oocytes instead of sperm.</text>
</comment>
<comment type="similarity">
    <text evidence="9">Belongs to the PI3/PI4-kinase family. TRA1 subfamily.</text>
</comment>
<name>TRR1_CAEBR</name>
<protein>
    <recommendedName>
        <fullName evidence="12">Transcription-associated protein 1</fullName>
        <shortName evidence="8">Cbr-trr-1</shortName>
        <shortName evidence="12">TRRAP-like protein 1</shortName>
    </recommendedName>
</protein>
<sequence length="4115" mass="475190">MDPSIPSTSHRSVPPDRGVQPDRNLHVQELENRIQSLVHGGQRDDVKLKELQDIWASLENHFTASSHEKVVEKLVLSILQLFCNTSPQFISENNTQMLRKLMLEILLRLSNTDPVKTHSKEILKQMMRLIGVENEENAILAIRILIDQGRYGKLDYCREVQSLLLLMRTMVKELAESGRTAEMFLVRELTVPPATSSEEQLIAEYLTKCYYAQPVILNAKDGLQGPKFNMIPSAHQSIKVLLEMPFLVIFFYQNFKTTVQTEALEFTRLCLDFLNVPVPADKTKYHDVLTDDFVTVQSKILSFVNIMAKIPAFMELLQQNGDSLVSGTMQMLERCPPDLISVRREVLLAVKYFTAGEMKSRFFTMLPRLISEHFILGTGFTAIELLRVFMYQMLADLMHHTRDTISYELISHVVFVFCRALHDPNNSAQVLIMSARLLNSLAESLCRMESQAPIRDLMLEILEAQVSKLKVMAVYHIPILFQQYGTEIEYEYRNYERESEKPKVNVMKESTQREVPKRRTRKLSMDSVEELEFLVTDNVNMTESEQKRNELPTPTKEHTKKTSPEAILNSLYAASTQPLGLSETRNLIKYVMHTCKYVTGQLKISRPSTEMYHCVRERDLYERLLRYGIMCMDIYVLPAVKNQAQAHASQRTKEEKEALESLANVFTSIDHAIFRELFEKYMDFLIERIYNRNYPLQLMVNTFLVRNEVPFFASTMLSFLMSRMKMLEVSSDKTALYVKLFKIIFSAIGANNSTIYQDRMLTNYLPEILKQSTVLALTAREPTNYFLLLRSLFRSIGGGAQDMLYGTFLQLLPNLLQFLNKLTSCQHRIQMREIFVELCLTVPVRLSSLLPYLPLLMDPLVCAMNGSPNLVTQGLRTLELCVDNLQPEYLLENMLPVRGALMQGLYRVISKAPDTASMKVAFRILGKFGGANRKLLNQPQLLQVRRFPDSYLNMEFSQMGLDGNHSLHLPISELMRVAADQMRYPADQIFNPNPTNIPSPHVKKCCMELSKAVLLAGLGSSGSHTVPTKDLPKVLKKLLTGFNVNQRTTEIYICPKENDREVYVNALLVVAYGIWNKDGLRQLYSRFFVKIIRQFALMGAIEFVSGNGWMQNADEEGALPLCLDSSVLVDALITCLSETSTSFFYGGIMCLRYINETLELALPDINQMSKVPLCKYLMEKVLKLCHGPAQYARAGGINAFMYMIEHYPRKFIMDFVIDVVDAIMEVLLGLVEEISSGSADIATDCFKKMMRTYFIQEENQEEENLTLASIFVAVFGKHYFHGNDRIRDYMAQLMEYCMIQSRLETNLDKFYYRFREFFEPELIRIMETLPTMSLTDAQGSLDGLQRFVFICPEGFEFEKDSEIYKRYLVHLLDLAQTDTQTINQRNAFKKCETCPSHFLPPFPILHHIDQMRGSALQCLVIAYDRLRKQLENTTRDIEDEQLMSEILAMNSPRITVEQIFENNESWRRLMTVLLRAITDKDIPDIADKLYPALMRVTPVPTNIIATFGANYIRNISRANDENDPDRTITYHDCRKFSILVELNPKILVRNIVKNLANHIIKYNMSDSISNILVMPNEAKEEEVEAYEAEKKRGVRDLEMIGYTAKMLAGCSMEILTAEIIIDITRFAAKFEYTYSQDVLPNWIDDVVKLMNKAPVEVWKFFLLRESVANPARRSLIRRAIIFPTSEPLRKVFMQTPEYLERLIDSNLDNYDNSDERVIIDREMFLLSLVDRISRNCHDWLSDPSLSPIPQLRAFFNGTEFMDRYSVRSIMVEEAREIRVISMTEDKYKVPKLMTNIFLRYLRFVRKYFPVKLIFYRNNIQDYDMFFNVVSVFMGKFQTDFTFVREYLEVEVIPKMPLWWRREIFIKVMVMFEENAQKACKDFRILKALQYLILPSLQWAFERYDTDEIVGSAPIDDSENAADAESSNNTENLVGRLTSVIGAHRLDFSDGMIILFYQLCTLFVQHAPEHIHNNHCKKQGGRLRNFMLFAWPCLATPNRQDPTLRYTGFFFLANIIERFTINRKIVLQVFQQLMTNYQQDTRDQVRRAIDILTPALKVRMEDGHQQILTQVKKLLIEEGHILQHIQHILGTIIRNWRVYYHIRHEILTPLLNAVQRALTMPNSVIEHAQTRKQAIEVCEMIIKWELLKLHKTDHIITDDEANEVDKLYEKLRGASSPDRYDFEDQQMKKDLLDSQRVITREHVDIVVNMLMRFCVMFHTSAQNNSTSGQQGAELVKKCQLLLRICLRSSVWGDFVNIRTSILNNYIVVPSELIPKQNEVQNPEYVLAANNSQYTIEMLNVIVPILPKPTLKNVLNILQPALIGVIQSSGHMSRGITQLISRLGERTSVSTNGLDEFELLNSYIVKYIHDSFSTILRCVLIWISIYSLNPFFRNQNAPVLSVLGSFTLLRAMCGHEAGFLDNFMPTFLKVMDRVAREHLQFNSRQQPSVQKNLSELTCVCMELVRQRIDHIGLELKRTTITDVMTELIFKSTSERVIQVCAKLIGAMLSPTDMEFSLHTCLQQLVRIQSVIISKFKNCKEVITEFLVVVIKVFENAEYRNSEYGARLWEAFFWGLKSTDPTTRDSFSAVWEMTWPQMSTADICHRMKYIMKHQDWSKFKHAFWLKFALWGMLRAISKRPKSVNNPKKKVVMLNCATPWRTIEYAARLKEQHMETDPMIKLEEPEPMEVDQPKNAPAEEPKDNKLSLDDFLAGQQELLEEAAEFDFADALDTVSQITFGINDNGMTSRIWVTFFKSFWASLQPREVEDFTALIVPFLSSGVHNQFQTGVQDSVLAVWLEAIGEKVPLPSSLIEFISSKHECWYTGISILESSIWSIPKQLNNTLLGNINCDRSLTSNIETLESLGALYKELAEFDQYSAIWERRSVFPETMKAMSALQLGDMDTAASILEQAMNKEMEHLPVPTANAAPPGPNDRQISPIYDREYEQWMQMYMSSCSELLQWQTVAEISNSREVQDVRGIITAASHIPDWNLVEDCRSMLSGCIPPDFHLEYTVFNLMSTVMRLNESVNVPHARERCKQALQECIEAHISRFRALPSVTSYGHVKILQSMNLVRDIEESMEVRIALLEQPTKMDQSLMMDMKSLMKVYRNRTPTTADDMGFVATWYDWRNQIHGMMLQRFEWFDKSSLSTTGNGNQSIVPIHSMAQAQLTVAKHAKSLGFNNLAKDLLNKLGGLPAIPMMDAVDKVCTYGKTLRALSNNVDDERSKQELLYEALEVLEDVRIDDLQKDQITSLLFNRATIHSALGQTANADRAFSAAVQLTDMKTANVPTGIKLFRQWGNHLNKLFFDQSQMVSKETSENFGRQALSCYFVAARVDGDLKARKPIAKILWIAKHLMASGASEALNRVIQKHLPSLNLFNWLYWIPQLVTEISHQPNNNFIMVLCRVSLKSESFNSNGASKVSKSGISGPRKQSKVTPRFPRFLIEQNLNQCDDIAAAHPLQVFYHIREAVSVEDIDAVFAQDYTEEEMSMDTPDDEAFSNDPPFSRALKICLKYRPTDIRVLHRILKELDQMTETWVERHLRFAVAIKDQLFEDFAEQMDARFNEMQFSGAVYELTQKWKRQLEEDYKFFENNYNLDLLEIRNRRRVIVTKGYMGTVPSQIMFEKELSQVFTDPPEMKDEFEYVTEITKVIFDQLDIRSPQAPRPALFVRTVMEWIRIIRRRFDRLPRRVPMEISSPYLARFSHRTGCIEMPYDLLNVLRAKNHSLNATNQTGQYISMMSRFEPYFEIVMRGGQVTRKIYLRGQTGKSAAFYLKKSIKDERTNRVPQMFKHVDYLLQNDRETARRHLSVPSLLQMRVSKNTTFCEIASVQPYAIPQDCSRNYPASQIEVMHPYEVLTSTFNGLYSPDDMVMHFYERFADSCSSIGQPLPQNIDPSMASQPRLTEPHHVKNIIYEDFARDMIPFRLLTDYLLARYPDPVMFYAMRKQFIHSFAVLSIIEYHCNLSPMTPHQMIISMNTGVLNNPFYRFELGTGQLMDIEHFAHEVPFRLTPNLMMFVGVAQDGDLLWSMAAVARCLMKKEPGAVMRPLLWDEYANNVNYENMIYICHAANSYVKCIENKVAMTNRHDAKVKKDDCNSLIIRAKDSDNLSRMPPTYHAWF</sequence>
<gene>
    <name evidence="12" type="primary">trr-1</name>
    <name evidence="12" type="ORF">CBG02835</name>
</gene>
<keyword id="KW-0217">Developmental protein</keyword>
<keyword id="KW-0221">Differentiation</keyword>
<keyword id="KW-0539">Nucleus</keyword>
<keyword id="KW-1185">Reference proteome</keyword>
<keyword id="KW-0677">Repeat</keyword>
<keyword id="KW-0744">Spermatogenesis</keyword>
<keyword id="KW-0802">TPR repeat</keyword>
<feature type="chain" id="PRO_0000432832" description="Transcription-associated protein 1" evidence="9">
    <location>
        <begin position="1"/>
        <end position="4115"/>
    </location>
</feature>
<feature type="repeat" description="TPR 1" evidence="2">
    <location>
        <begin position="1341"/>
        <end position="1374"/>
    </location>
</feature>
<feature type="repeat" description="TPR 2" evidence="2">
    <location>
        <begin position="1820"/>
        <end position="1853"/>
    </location>
</feature>
<feature type="domain" description="FAT" evidence="4">
    <location>
        <begin position="2808"/>
        <end position="3421"/>
    </location>
</feature>
<feature type="repeat" description="TPR 3" evidence="2">
    <location>
        <begin position="2855"/>
        <end position="2888"/>
    </location>
</feature>
<feature type="domain" description="PI3K/PI4K catalytic" evidence="3">
    <location>
        <begin position="3740"/>
        <end position="4100"/>
    </location>
</feature>
<feature type="domain" description="FATC" evidence="5">
    <location>
        <begin position="4083"/>
        <end position="4115"/>
    </location>
</feature>
<feature type="region of interest" description="Disordered" evidence="6">
    <location>
        <begin position="1"/>
        <end position="21"/>
    </location>
</feature>
<feature type="region of interest" description="Disordered" evidence="6">
    <location>
        <begin position="543"/>
        <end position="563"/>
    </location>
</feature>
<feature type="region of interest" description="Disordered" evidence="6">
    <location>
        <begin position="2678"/>
        <end position="2701"/>
    </location>
</feature>
<feature type="region of interest" description="G-loop" evidence="3">
    <location>
        <begin position="3746"/>
        <end position="3752"/>
    </location>
</feature>
<feature type="region of interest" description="Catalytic loop" evidence="3">
    <location>
        <begin position="3959"/>
        <end position="3967"/>
    </location>
</feature>
<feature type="region of interest" description="Activation loop" evidence="3">
    <location>
        <begin position="3979"/>
        <end position="4006"/>
    </location>
</feature>
<feature type="compositionally biased region" description="Polar residues" evidence="6">
    <location>
        <begin position="1"/>
        <end position="11"/>
    </location>
</feature>
<feature type="compositionally biased region" description="Basic and acidic residues" evidence="6">
    <location>
        <begin position="544"/>
        <end position="563"/>
    </location>
</feature>
<feature type="mutagenesis site" description="In v76; causes a Fog phenotype." evidence="7">
    <original>L</original>
    <variation>F</variation>
    <location>
        <position position="1123"/>
    </location>
</feature>
<feature type="mutagenesis site" description="In v104; causes a mild Fog phenotype." evidence="7">
    <original>G</original>
    <variation>E</variation>
    <location>
        <position position="1196"/>
    </location>
</feature>
<accession>A8WTE8</accession>